<name>3MGH_SYNJA</name>
<organism>
    <name type="scientific">Synechococcus sp. (strain JA-3-3Ab)</name>
    <name type="common">Cyanobacteria bacterium Yellowstone A-Prime</name>
    <dbReference type="NCBI Taxonomy" id="321327"/>
    <lineage>
        <taxon>Bacteria</taxon>
        <taxon>Bacillati</taxon>
        <taxon>Cyanobacteriota</taxon>
        <taxon>Cyanophyceae</taxon>
        <taxon>Synechococcales</taxon>
        <taxon>Synechococcaceae</taxon>
        <taxon>Synechococcus</taxon>
    </lineage>
</organism>
<protein>
    <recommendedName>
        <fullName evidence="1">Putative 3-methyladenine DNA glycosylase</fullName>
        <ecNumber evidence="1">3.2.2.-</ecNumber>
    </recommendedName>
</protein>
<feature type="chain" id="PRO_0000265066" description="Putative 3-methyladenine DNA glycosylase">
    <location>
        <begin position="1"/>
        <end position="195"/>
    </location>
</feature>
<gene>
    <name type="ordered locus">CYA_0301</name>
</gene>
<sequence length="195" mass="21701">MAAWEWLSKPAPLVAPTLLGMVLVRQFADGLQVRAQIVETEAYTAGDPACHAYRRKTRRNQVMFGPPGHLYVYRIYGLYHCLNIVTEAEGIASAVLIRAAQLDCLPEWIPANKRLKPARVAAGPGLLCQALRIDGSHNGWRLEPVAAGQEGIWLEGSPAWEAQFPIVQTTRIGITRGVELPWRWYIKGHPAVSHY</sequence>
<keyword id="KW-0227">DNA damage</keyword>
<keyword id="KW-0234">DNA repair</keyword>
<keyword id="KW-0378">Hydrolase</keyword>
<proteinExistence type="inferred from homology"/>
<reference key="1">
    <citation type="journal article" date="2007" name="ISME J.">
        <title>Population level functional diversity in a microbial community revealed by comparative genomic and metagenomic analyses.</title>
        <authorList>
            <person name="Bhaya D."/>
            <person name="Grossman A.R."/>
            <person name="Steunou A.-S."/>
            <person name="Khuri N."/>
            <person name="Cohan F.M."/>
            <person name="Hamamura N."/>
            <person name="Melendrez M.C."/>
            <person name="Bateson M.M."/>
            <person name="Ward D.M."/>
            <person name="Heidelberg J.F."/>
        </authorList>
    </citation>
    <scope>NUCLEOTIDE SEQUENCE [LARGE SCALE GENOMIC DNA]</scope>
    <source>
        <strain>JA-3-3Ab</strain>
    </source>
</reference>
<evidence type="ECO:0000255" key="1">
    <source>
        <dbReference type="HAMAP-Rule" id="MF_00527"/>
    </source>
</evidence>
<comment type="similarity">
    <text evidence="1">Belongs to the DNA glycosylase MPG family.</text>
</comment>
<dbReference type="EC" id="3.2.2.-" evidence="1"/>
<dbReference type="EMBL" id="CP000239">
    <property type="protein sequence ID" value="ABC98522.1"/>
    <property type="molecule type" value="Genomic_DNA"/>
</dbReference>
<dbReference type="SMR" id="Q2JXG4"/>
<dbReference type="STRING" id="321327.CYA_0301"/>
<dbReference type="KEGG" id="cya:CYA_0301"/>
<dbReference type="eggNOG" id="COG2094">
    <property type="taxonomic scope" value="Bacteria"/>
</dbReference>
<dbReference type="HOGENOM" id="CLU_060471_4_1_3"/>
<dbReference type="Proteomes" id="UP000008818">
    <property type="component" value="Chromosome"/>
</dbReference>
<dbReference type="GO" id="GO:0003905">
    <property type="term" value="F:alkylbase DNA N-glycosylase activity"/>
    <property type="evidence" value="ECO:0007669"/>
    <property type="project" value="InterPro"/>
</dbReference>
<dbReference type="GO" id="GO:0003677">
    <property type="term" value="F:DNA binding"/>
    <property type="evidence" value="ECO:0007669"/>
    <property type="project" value="InterPro"/>
</dbReference>
<dbReference type="GO" id="GO:0006284">
    <property type="term" value="P:base-excision repair"/>
    <property type="evidence" value="ECO:0007669"/>
    <property type="project" value="InterPro"/>
</dbReference>
<dbReference type="CDD" id="cd00540">
    <property type="entry name" value="AAG"/>
    <property type="match status" value="1"/>
</dbReference>
<dbReference type="Gene3D" id="3.10.300.10">
    <property type="entry name" value="Methylpurine-DNA glycosylase (MPG)"/>
    <property type="match status" value="1"/>
</dbReference>
<dbReference type="HAMAP" id="MF_00527">
    <property type="entry name" value="3MGH"/>
    <property type="match status" value="1"/>
</dbReference>
<dbReference type="InterPro" id="IPR011034">
    <property type="entry name" value="Formyl_transferase-like_C_sf"/>
</dbReference>
<dbReference type="InterPro" id="IPR003180">
    <property type="entry name" value="MPG"/>
</dbReference>
<dbReference type="InterPro" id="IPR036995">
    <property type="entry name" value="MPG_sf"/>
</dbReference>
<dbReference type="NCBIfam" id="TIGR00567">
    <property type="entry name" value="3mg"/>
    <property type="match status" value="1"/>
</dbReference>
<dbReference type="PANTHER" id="PTHR10429">
    <property type="entry name" value="DNA-3-METHYLADENINE GLYCOSYLASE"/>
    <property type="match status" value="1"/>
</dbReference>
<dbReference type="PANTHER" id="PTHR10429:SF0">
    <property type="entry name" value="DNA-3-METHYLADENINE GLYCOSYLASE"/>
    <property type="match status" value="1"/>
</dbReference>
<dbReference type="Pfam" id="PF02245">
    <property type="entry name" value="Pur_DNA_glyco"/>
    <property type="match status" value="1"/>
</dbReference>
<dbReference type="SUPFAM" id="SSF50486">
    <property type="entry name" value="FMT C-terminal domain-like"/>
    <property type="match status" value="1"/>
</dbReference>
<accession>Q2JXG4</accession>